<reference key="1">
    <citation type="journal article" date="2005" name="PLoS Biol.">
        <title>The genomes of Oryza sativa: a history of duplications.</title>
        <authorList>
            <person name="Yu J."/>
            <person name="Wang J."/>
            <person name="Lin W."/>
            <person name="Li S."/>
            <person name="Li H."/>
            <person name="Zhou J."/>
            <person name="Ni P."/>
            <person name="Dong W."/>
            <person name="Hu S."/>
            <person name="Zeng C."/>
            <person name="Zhang J."/>
            <person name="Zhang Y."/>
            <person name="Li R."/>
            <person name="Xu Z."/>
            <person name="Li S."/>
            <person name="Li X."/>
            <person name="Zheng H."/>
            <person name="Cong L."/>
            <person name="Lin L."/>
            <person name="Yin J."/>
            <person name="Geng J."/>
            <person name="Li G."/>
            <person name="Shi J."/>
            <person name="Liu J."/>
            <person name="Lv H."/>
            <person name="Li J."/>
            <person name="Wang J."/>
            <person name="Deng Y."/>
            <person name="Ran L."/>
            <person name="Shi X."/>
            <person name="Wang X."/>
            <person name="Wu Q."/>
            <person name="Li C."/>
            <person name="Ren X."/>
            <person name="Wang J."/>
            <person name="Wang X."/>
            <person name="Li D."/>
            <person name="Liu D."/>
            <person name="Zhang X."/>
            <person name="Ji Z."/>
            <person name="Zhao W."/>
            <person name="Sun Y."/>
            <person name="Zhang Z."/>
            <person name="Bao J."/>
            <person name="Han Y."/>
            <person name="Dong L."/>
            <person name="Ji J."/>
            <person name="Chen P."/>
            <person name="Wu S."/>
            <person name="Liu J."/>
            <person name="Xiao Y."/>
            <person name="Bu D."/>
            <person name="Tan J."/>
            <person name="Yang L."/>
            <person name="Ye C."/>
            <person name="Zhang J."/>
            <person name="Xu J."/>
            <person name="Zhou Y."/>
            <person name="Yu Y."/>
            <person name="Zhang B."/>
            <person name="Zhuang S."/>
            <person name="Wei H."/>
            <person name="Liu B."/>
            <person name="Lei M."/>
            <person name="Yu H."/>
            <person name="Li Y."/>
            <person name="Xu H."/>
            <person name="Wei S."/>
            <person name="He X."/>
            <person name="Fang L."/>
            <person name="Zhang Z."/>
            <person name="Zhang Y."/>
            <person name="Huang X."/>
            <person name="Su Z."/>
            <person name="Tong W."/>
            <person name="Li J."/>
            <person name="Tong Z."/>
            <person name="Li S."/>
            <person name="Ye J."/>
            <person name="Wang L."/>
            <person name="Fang L."/>
            <person name="Lei T."/>
            <person name="Chen C.-S."/>
            <person name="Chen H.-C."/>
            <person name="Xu Z."/>
            <person name="Li H."/>
            <person name="Huang H."/>
            <person name="Zhang F."/>
            <person name="Xu H."/>
            <person name="Li N."/>
            <person name="Zhao C."/>
            <person name="Li S."/>
            <person name="Dong L."/>
            <person name="Huang Y."/>
            <person name="Li L."/>
            <person name="Xi Y."/>
            <person name="Qi Q."/>
            <person name="Li W."/>
            <person name="Zhang B."/>
            <person name="Hu W."/>
            <person name="Zhang Y."/>
            <person name="Tian X."/>
            <person name="Jiao Y."/>
            <person name="Liang X."/>
            <person name="Jin J."/>
            <person name="Gao L."/>
            <person name="Zheng W."/>
            <person name="Hao B."/>
            <person name="Liu S.-M."/>
            <person name="Wang W."/>
            <person name="Yuan L."/>
            <person name="Cao M."/>
            <person name="McDermott J."/>
            <person name="Samudrala R."/>
            <person name="Wang J."/>
            <person name="Wong G.K.-S."/>
            <person name="Yang H."/>
        </authorList>
    </citation>
    <scope>NUCLEOTIDE SEQUENCE [LARGE SCALE GENOMIC DNA]</scope>
    <source>
        <strain>cv. 93-11</strain>
    </source>
</reference>
<reference key="2">
    <citation type="journal article" date="2007" name="Plant Physiol.">
        <title>A WUSCHEL-LIKE HOMEOBOX gene represses a YABBY gene expression required for rice leaf development.</title>
        <authorList>
            <person name="Dai M."/>
            <person name="Hu Y."/>
            <person name="Zhao Y."/>
            <person name="Liu H."/>
            <person name="Zhou D.-X."/>
        </authorList>
    </citation>
    <scope>NOMENCLATURE</scope>
</reference>
<protein>
    <recommendedName>
        <fullName>WUSCHEL-related homeobox 6</fullName>
    </recommendedName>
    <alternativeName>
        <fullName>OsWOX6</fullName>
    </alternativeName>
</protein>
<name>WOX6_ORYSI</name>
<proteinExistence type="inferred from homology"/>
<gene>
    <name type="primary">WOX6</name>
    <name type="ORF">OsI_011070</name>
</gene>
<accession>A2XG77</accession>
<comment type="function">
    <text evidence="1">Transcription factor which may be involved in developmental processes.</text>
</comment>
<comment type="subcellular location">
    <subcellularLocation>
        <location evidence="2">Nucleus</location>
    </subcellularLocation>
</comment>
<comment type="similarity">
    <text evidence="4">Belongs to the WUS homeobox family.</text>
</comment>
<evidence type="ECO:0000250" key="1"/>
<evidence type="ECO:0000255" key="2">
    <source>
        <dbReference type="PROSITE-ProRule" id="PRU00108"/>
    </source>
</evidence>
<evidence type="ECO:0000256" key="3">
    <source>
        <dbReference type="SAM" id="MobiDB-lite"/>
    </source>
</evidence>
<evidence type="ECO:0000305" key="4"/>
<sequence>MEGSSNSPDRQSSGGSPPEERGGGGSGGGGGRSAAGEPVRSRWTPKPEQILILESIFNSGMVNPPKDETVRIRKLLERFGAVGDANVFYWFQNRRSRSRRRQRQMQAAAAAAAAAASSSSPSANTSPAAASAATVQVGLPPVAVVHTMAMGGSACQYEQQASSSSSSGSTGGSSLGLFAHGAGASGAGGYLQASCGASASASSALAPGLMGDVVDSGGSDDLFAISRQMGFVGSPRCSPASSPATPSSAATAAQQQFYSCQLPAATITVFINGVPMEMPRGPIDLRAMFGQDVMLVHSTGALLPVNDYGILMQSLQIGESYFLVARPT</sequence>
<dbReference type="EMBL" id="CM000128">
    <property type="protein sequence ID" value="EAY89837.1"/>
    <property type="molecule type" value="Genomic_DNA"/>
</dbReference>
<dbReference type="SMR" id="A2XG77"/>
<dbReference type="STRING" id="39946.A2XG77"/>
<dbReference type="EnsemblPlants" id="BGIOSGA010824-TA">
    <property type="protein sequence ID" value="BGIOSGA010824-PA"/>
    <property type="gene ID" value="BGIOSGA010824"/>
</dbReference>
<dbReference type="EnsemblPlants" id="OsGoSa_03g0016010.01">
    <property type="protein sequence ID" value="OsGoSa_03g0016010.01"/>
    <property type="gene ID" value="OsGoSa_03g0016010"/>
</dbReference>
<dbReference type="EnsemblPlants" id="OsIR64_03g0015710.01">
    <property type="protein sequence ID" value="OsIR64_03g0015710.01"/>
    <property type="gene ID" value="OsIR64_03g0015710"/>
</dbReference>
<dbReference type="EnsemblPlants" id="OsKYG_03g0015980.01">
    <property type="protein sequence ID" value="OsKYG_03g0015980.01"/>
    <property type="gene ID" value="OsKYG_03g0015980"/>
</dbReference>
<dbReference type="EnsemblPlants" id="OsLaMu_03g0015830.01">
    <property type="protein sequence ID" value="OsLaMu_03g0015830.01"/>
    <property type="gene ID" value="OsLaMu_03g0015830"/>
</dbReference>
<dbReference type="EnsemblPlants" id="OsLima_03g0015970.01">
    <property type="protein sequence ID" value="OsLima_03g0015970.01"/>
    <property type="gene ID" value="OsLima_03g0015970"/>
</dbReference>
<dbReference type="EnsemblPlants" id="OsLiXu_03g0015890.01">
    <property type="protein sequence ID" value="OsLiXu_03g0015890.01"/>
    <property type="gene ID" value="OsLiXu_03g0015890"/>
</dbReference>
<dbReference type="EnsemblPlants" id="OsMH63_03G015950_01">
    <property type="protein sequence ID" value="OsMH63_03G015950_01"/>
    <property type="gene ID" value="OsMH63_03G015950"/>
</dbReference>
<dbReference type="EnsemblPlants" id="OsPr106_03g0015830.01">
    <property type="protein sequence ID" value="OsPr106_03g0015830.01"/>
    <property type="gene ID" value="OsPr106_03g0015830"/>
</dbReference>
<dbReference type="EnsemblPlants" id="OsZS97_03G015870_01">
    <property type="protein sequence ID" value="OsZS97_03G015870_01"/>
    <property type="gene ID" value="OsZS97_03G015870"/>
</dbReference>
<dbReference type="Gramene" id="BGIOSGA010824-TA">
    <property type="protein sequence ID" value="BGIOSGA010824-PA"/>
    <property type="gene ID" value="BGIOSGA010824"/>
</dbReference>
<dbReference type="Gramene" id="OsGoSa_03g0016010.01">
    <property type="protein sequence ID" value="OsGoSa_03g0016010.01"/>
    <property type="gene ID" value="OsGoSa_03g0016010"/>
</dbReference>
<dbReference type="Gramene" id="OsIR64_03g0015710.01">
    <property type="protein sequence ID" value="OsIR64_03g0015710.01"/>
    <property type="gene ID" value="OsIR64_03g0015710"/>
</dbReference>
<dbReference type="Gramene" id="OsKYG_03g0015980.01">
    <property type="protein sequence ID" value="OsKYG_03g0015980.01"/>
    <property type="gene ID" value="OsKYG_03g0015980"/>
</dbReference>
<dbReference type="Gramene" id="OsLaMu_03g0015830.01">
    <property type="protein sequence ID" value="OsLaMu_03g0015830.01"/>
    <property type="gene ID" value="OsLaMu_03g0015830"/>
</dbReference>
<dbReference type="Gramene" id="OsLima_03g0015970.01">
    <property type="protein sequence ID" value="OsLima_03g0015970.01"/>
    <property type="gene ID" value="OsLima_03g0015970"/>
</dbReference>
<dbReference type="Gramene" id="OsLiXu_03g0015890.01">
    <property type="protein sequence ID" value="OsLiXu_03g0015890.01"/>
    <property type="gene ID" value="OsLiXu_03g0015890"/>
</dbReference>
<dbReference type="Gramene" id="OsMH63_03G015950_01">
    <property type="protein sequence ID" value="OsMH63_03G015950_01"/>
    <property type="gene ID" value="OsMH63_03G015950"/>
</dbReference>
<dbReference type="Gramene" id="OsPr106_03g0015830.01">
    <property type="protein sequence ID" value="OsPr106_03g0015830.01"/>
    <property type="gene ID" value="OsPr106_03g0015830"/>
</dbReference>
<dbReference type="Gramene" id="OsZS97_03G015870_01">
    <property type="protein sequence ID" value="OsZS97_03G015870_01"/>
    <property type="gene ID" value="OsZS97_03G015870"/>
</dbReference>
<dbReference type="HOGENOM" id="CLU_030463_0_0_1"/>
<dbReference type="OMA" id="QMGFAES"/>
<dbReference type="OrthoDB" id="670226at2759"/>
<dbReference type="Proteomes" id="UP000007015">
    <property type="component" value="Chromosome 3"/>
</dbReference>
<dbReference type="GO" id="GO:0005634">
    <property type="term" value="C:nucleus"/>
    <property type="evidence" value="ECO:0007669"/>
    <property type="project" value="UniProtKB-SubCell"/>
</dbReference>
<dbReference type="GO" id="GO:0003677">
    <property type="term" value="F:DNA binding"/>
    <property type="evidence" value="ECO:0007669"/>
    <property type="project" value="UniProtKB-KW"/>
</dbReference>
<dbReference type="GO" id="GO:0003700">
    <property type="term" value="F:DNA-binding transcription factor activity"/>
    <property type="evidence" value="ECO:0007669"/>
    <property type="project" value="InterPro"/>
</dbReference>
<dbReference type="GO" id="GO:0048830">
    <property type="term" value="P:adventitious root development"/>
    <property type="evidence" value="ECO:0007669"/>
    <property type="project" value="InterPro"/>
</dbReference>
<dbReference type="FunFam" id="1.10.10.60:FF:000118">
    <property type="entry name" value="WUSCHEL-related homeobox 11"/>
    <property type="match status" value="1"/>
</dbReference>
<dbReference type="Gene3D" id="1.10.10.60">
    <property type="entry name" value="Homeodomain-like"/>
    <property type="match status" value="1"/>
</dbReference>
<dbReference type="InterPro" id="IPR001356">
    <property type="entry name" value="HD"/>
</dbReference>
<dbReference type="InterPro" id="IPR009057">
    <property type="entry name" value="Homeodomain-like_sf"/>
</dbReference>
<dbReference type="InterPro" id="IPR044558">
    <property type="entry name" value="WOX11-like"/>
</dbReference>
<dbReference type="PANTHER" id="PTHR46998">
    <property type="entry name" value="WUSCHEL-RELATED HOMEOBOX 11"/>
    <property type="match status" value="1"/>
</dbReference>
<dbReference type="PANTHER" id="PTHR46998:SF2">
    <property type="entry name" value="WUSCHEL-RELATED HOMEOBOX 11"/>
    <property type="match status" value="1"/>
</dbReference>
<dbReference type="Pfam" id="PF00046">
    <property type="entry name" value="Homeodomain"/>
    <property type="match status" value="1"/>
</dbReference>
<dbReference type="SMART" id="SM00389">
    <property type="entry name" value="HOX"/>
    <property type="match status" value="1"/>
</dbReference>
<dbReference type="SUPFAM" id="SSF46689">
    <property type="entry name" value="Homeodomain-like"/>
    <property type="match status" value="1"/>
</dbReference>
<dbReference type="PROSITE" id="PS50071">
    <property type="entry name" value="HOMEOBOX_2"/>
    <property type="match status" value="1"/>
</dbReference>
<feature type="chain" id="PRO_0000308642" description="WUSCHEL-related homeobox 6">
    <location>
        <begin position="1"/>
        <end position="328"/>
    </location>
</feature>
<feature type="DNA-binding region" description="Homeobox; WUS-type" evidence="2">
    <location>
        <begin position="38"/>
        <end position="102"/>
    </location>
</feature>
<feature type="region of interest" description="Disordered" evidence="3">
    <location>
        <begin position="1"/>
        <end position="45"/>
    </location>
</feature>
<feature type="compositionally biased region" description="Polar residues" evidence="3">
    <location>
        <begin position="1"/>
        <end position="11"/>
    </location>
</feature>
<feature type="compositionally biased region" description="Gly residues" evidence="3">
    <location>
        <begin position="23"/>
        <end position="33"/>
    </location>
</feature>
<keyword id="KW-0217">Developmental protein</keyword>
<keyword id="KW-0238">DNA-binding</keyword>
<keyword id="KW-0371">Homeobox</keyword>
<keyword id="KW-0539">Nucleus</keyword>
<keyword id="KW-1185">Reference proteome</keyword>
<keyword id="KW-0804">Transcription</keyword>
<keyword id="KW-0805">Transcription regulation</keyword>
<organism>
    <name type="scientific">Oryza sativa subsp. indica</name>
    <name type="common">Rice</name>
    <dbReference type="NCBI Taxonomy" id="39946"/>
    <lineage>
        <taxon>Eukaryota</taxon>
        <taxon>Viridiplantae</taxon>
        <taxon>Streptophyta</taxon>
        <taxon>Embryophyta</taxon>
        <taxon>Tracheophyta</taxon>
        <taxon>Spermatophyta</taxon>
        <taxon>Magnoliopsida</taxon>
        <taxon>Liliopsida</taxon>
        <taxon>Poales</taxon>
        <taxon>Poaceae</taxon>
        <taxon>BOP clade</taxon>
        <taxon>Oryzoideae</taxon>
        <taxon>Oryzeae</taxon>
        <taxon>Oryzinae</taxon>
        <taxon>Oryza</taxon>
        <taxon>Oryza sativa</taxon>
    </lineage>
</organism>